<name>RIMM_BRASB</name>
<protein>
    <recommendedName>
        <fullName evidence="1">Ribosome maturation factor RimM</fullName>
    </recommendedName>
</protein>
<proteinExistence type="inferred from homology"/>
<comment type="function">
    <text evidence="1">An accessory protein needed during the final step in the assembly of 30S ribosomal subunit, possibly for assembly of the head region. Essential for efficient processing of 16S rRNA. May be needed both before and after RbfA during the maturation of 16S rRNA. It has affinity for free ribosomal 30S subunits but not for 70S ribosomes.</text>
</comment>
<comment type="subunit">
    <text evidence="1">Binds ribosomal protein uS19.</text>
</comment>
<comment type="subcellular location">
    <subcellularLocation>
        <location evidence="1">Cytoplasm</location>
    </subcellularLocation>
</comment>
<comment type="domain">
    <text evidence="1">The PRC barrel domain binds ribosomal protein uS19.</text>
</comment>
<comment type="similarity">
    <text evidence="1">Belongs to the RimM family.</text>
</comment>
<accession>A5E909</accession>
<dbReference type="EMBL" id="CP000494">
    <property type="protein sequence ID" value="ABQ32653.1"/>
    <property type="molecule type" value="Genomic_DNA"/>
</dbReference>
<dbReference type="RefSeq" id="WP_012040707.1">
    <property type="nucleotide sequence ID" value="NC_009485.1"/>
</dbReference>
<dbReference type="SMR" id="A5E909"/>
<dbReference type="STRING" id="288000.BBta_0366"/>
<dbReference type="KEGG" id="bbt:BBta_0366"/>
<dbReference type="eggNOG" id="COG0806">
    <property type="taxonomic scope" value="Bacteria"/>
</dbReference>
<dbReference type="HOGENOM" id="CLU_077636_0_1_5"/>
<dbReference type="OrthoDB" id="9788191at2"/>
<dbReference type="Proteomes" id="UP000000246">
    <property type="component" value="Chromosome"/>
</dbReference>
<dbReference type="GO" id="GO:0005737">
    <property type="term" value="C:cytoplasm"/>
    <property type="evidence" value="ECO:0007669"/>
    <property type="project" value="UniProtKB-SubCell"/>
</dbReference>
<dbReference type="GO" id="GO:0005840">
    <property type="term" value="C:ribosome"/>
    <property type="evidence" value="ECO:0007669"/>
    <property type="project" value="InterPro"/>
</dbReference>
<dbReference type="GO" id="GO:0043022">
    <property type="term" value="F:ribosome binding"/>
    <property type="evidence" value="ECO:0007669"/>
    <property type="project" value="InterPro"/>
</dbReference>
<dbReference type="GO" id="GO:0042274">
    <property type="term" value="P:ribosomal small subunit biogenesis"/>
    <property type="evidence" value="ECO:0007669"/>
    <property type="project" value="UniProtKB-UniRule"/>
</dbReference>
<dbReference type="GO" id="GO:0006364">
    <property type="term" value="P:rRNA processing"/>
    <property type="evidence" value="ECO:0007669"/>
    <property type="project" value="UniProtKB-UniRule"/>
</dbReference>
<dbReference type="Gene3D" id="2.30.30.240">
    <property type="entry name" value="PRC-barrel domain"/>
    <property type="match status" value="1"/>
</dbReference>
<dbReference type="Gene3D" id="2.40.30.60">
    <property type="entry name" value="RimM"/>
    <property type="match status" value="1"/>
</dbReference>
<dbReference type="HAMAP" id="MF_00014">
    <property type="entry name" value="Ribosome_mat_RimM"/>
    <property type="match status" value="1"/>
</dbReference>
<dbReference type="InterPro" id="IPR011033">
    <property type="entry name" value="PRC_barrel-like_sf"/>
</dbReference>
<dbReference type="InterPro" id="IPR056792">
    <property type="entry name" value="PRC_RimM"/>
</dbReference>
<dbReference type="InterPro" id="IPR011961">
    <property type="entry name" value="RimM"/>
</dbReference>
<dbReference type="InterPro" id="IPR002676">
    <property type="entry name" value="RimM_N"/>
</dbReference>
<dbReference type="InterPro" id="IPR036976">
    <property type="entry name" value="RimM_N_sf"/>
</dbReference>
<dbReference type="InterPro" id="IPR009000">
    <property type="entry name" value="Transl_B-barrel_sf"/>
</dbReference>
<dbReference type="NCBIfam" id="TIGR02273">
    <property type="entry name" value="16S_RimM"/>
    <property type="match status" value="1"/>
</dbReference>
<dbReference type="PANTHER" id="PTHR33692">
    <property type="entry name" value="RIBOSOME MATURATION FACTOR RIMM"/>
    <property type="match status" value="1"/>
</dbReference>
<dbReference type="PANTHER" id="PTHR33692:SF1">
    <property type="entry name" value="RIBOSOME MATURATION FACTOR RIMM"/>
    <property type="match status" value="1"/>
</dbReference>
<dbReference type="Pfam" id="PF24986">
    <property type="entry name" value="PRC_RimM"/>
    <property type="match status" value="1"/>
</dbReference>
<dbReference type="Pfam" id="PF01782">
    <property type="entry name" value="RimM"/>
    <property type="match status" value="1"/>
</dbReference>
<dbReference type="SUPFAM" id="SSF50346">
    <property type="entry name" value="PRC-barrel domain"/>
    <property type="match status" value="1"/>
</dbReference>
<dbReference type="SUPFAM" id="SSF50447">
    <property type="entry name" value="Translation proteins"/>
    <property type="match status" value="1"/>
</dbReference>
<gene>
    <name evidence="1" type="primary">rimM</name>
    <name type="ordered locus">BBta_0366</name>
</gene>
<evidence type="ECO:0000255" key="1">
    <source>
        <dbReference type="HAMAP-Rule" id="MF_00014"/>
    </source>
</evidence>
<evidence type="ECO:0000256" key="2">
    <source>
        <dbReference type="SAM" id="MobiDB-lite"/>
    </source>
</evidence>
<reference key="1">
    <citation type="journal article" date="2007" name="Science">
        <title>Legumes symbioses: absence of nod genes in photosynthetic bradyrhizobia.</title>
        <authorList>
            <person name="Giraud E."/>
            <person name="Moulin L."/>
            <person name="Vallenet D."/>
            <person name="Barbe V."/>
            <person name="Cytryn E."/>
            <person name="Avarre J.-C."/>
            <person name="Jaubert M."/>
            <person name="Simon D."/>
            <person name="Cartieaux F."/>
            <person name="Prin Y."/>
            <person name="Bena G."/>
            <person name="Hannibal L."/>
            <person name="Fardoux J."/>
            <person name="Kojadinovic M."/>
            <person name="Vuillet L."/>
            <person name="Lajus A."/>
            <person name="Cruveiller S."/>
            <person name="Rouy Z."/>
            <person name="Mangenot S."/>
            <person name="Segurens B."/>
            <person name="Dossat C."/>
            <person name="Franck W.L."/>
            <person name="Chang W.-S."/>
            <person name="Saunders E."/>
            <person name="Bruce D."/>
            <person name="Richardson P."/>
            <person name="Normand P."/>
            <person name="Dreyfus B."/>
            <person name="Pignol D."/>
            <person name="Stacey G."/>
            <person name="Emerich D."/>
            <person name="Vermeglio A."/>
            <person name="Medigue C."/>
            <person name="Sadowsky M."/>
        </authorList>
    </citation>
    <scope>NUCLEOTIDE SEQUENCE [LARGE SCALE GENOMIC DNA]</scope>
    <source>
        <strain>BTAi1 / ATCC BAA-1182</strain>
    </source>
</reference>
<feature type="chain" id="PRO_1000001154" description="Ribosome maturation factor RimM">
    <location>
        <begin position="1"/>
        <end position="198"/>
    </location>
</feature>
<feature type="domain" description="PRC barrel" evidence="1">
    <location>
        <begin position="92"/>
        <end position="168"/>
    </location>
</feature>
<feature type="region of interest" description="Disordered" evidence="2">
    <location>
        <begin position="163"/>
        <end position="198"/>
    </location>
</feature>
<feature type="compositionally biased region" description="Acidic residues" evidence="2">
    <location>
        <begin position="163"/>
        <end position="172"/>
    </location>
</feature>
<organism>
    <name type="scientific">Bradyrhizobium sp. (strain BTAi1 / ATCC BAA-1182)</name>
    <dbReference type="NCBI Taxonomy" id="288000"/>
    <lineage>
        <taxon>Bacteria</taxon>
        <taxon>Pseudomonadati</taxon>
        <taxon>Pseudomonadota</taxon>
        <taxon>Alphaproteobacteria</taxon>
        <taxon>Hyphomicrobiales</taxon>
        <taxon>Nitrobacteraceae</taxon>
        <taxon>Bradyrhizobium</taxon>
    </lineage>
</organism>
<keyword id="KW-0143">Chaperone</keyword>
<keyword id="KW-0963">Cytoplasm</keyword>
<keyword id="KW-1185">Reference proteome</keyword>
<keyword id="KW-0690">Ribosome biogenesis</keyword>
<keyword id="KW-0698">rRNA processing</keyword>
<sequence length="198" mass="20933">MSKLICVAKIGAAHGVRGEVRLWTFTEDPLAVLHYGPLTTKDGSRSFEVAKAREAKDHLVATIKGVTDRNAAERLNGLELYVPRDRLPETDDDEYYHADLIGLAAETTAGAPLGRVLAIHNFGAGDIIEIAPPSGSTLMLPFTNAVVPTVDLAGGRVIIELPAEIEGEDQDSSDNAGSPEGDAAASNSARHPRESGDP</sequence>